<gene>
    <name evidence="1" type="primary">rplB</name>
    <name type="ordered locus">ERGA_CDS_06260</name>
</gene>
<dbReference type="EMBL" id="CR925677">
    <property type="protein sequence ID" value="CAI28078.1"/>
    <property type="molecule type" value="Genomic_DNA"/>
</dbReference>
<dbReference type="RefSeq" id="WP_011155286.1">
    <property type="nucleotide sequence ID" value="NC_006831.1"/>
</dbReference>
<dbReference type="SMR" id="Q5FFU3"/>
<dbReference type="GeneID" id="33058373"/>
<dbReference type="KEGG" id="erg:ERGA_CDS_06260"/>
<dbReference type="HOGENOM" id="CLU_036235_2_1_5"/>
<dbReference type="OrthoDB" id="9778722at2"/>
<dbReference type="Proteomes" id="UP000000533">
    <property type="component" value="Chromosome"/>
</dbReference>
<dbReference type="GO" id="GO:0015934">
    <property type="term" value="C:large ribosomal subunit"/>
    <property type="evidence" value="ECO:0007669"/>
    <property type="project" value="InterPro"/>
</dbReference>
<dbReference type="GO" id="GO:0019843">
    <property type="term" value="F:rRNA binding"/>
    <property type="evidence" value="ECO:0007669"/>
    <property type="project" value="UniProtKB-UniRule"/>
</dbReference>
<dbReference type="GO" id="GO:0003735">
    <property type="term" value="F:structural constituent of ribosome"/>
    <property type="evidence" value="ECO:0007669"/>
    <property type="project" value="InterPro"/>
</dbReference>
<dbReference type="GO" id="GO:0016740">
    <property type="term" value="F:transferase activity"/>
    <property type="evidence" value="ECO:0007669"/>
    <property type="project" value="InterPro"/>
</dbReference>
<dbReference type="GO" id="GO:0002181">
    <property type="term" value="P:cytoplasmic translation"/>
    <property type="evidence" value="ECO:0007669"/>
    <property type="project" value="TreeGrafter"/>
</dbReference>
<dbReference type="FunFam" id="2.30.30.30:FF:000001">
    <property type="entry name" value="50S ribosomal protein L2"/>
    <property type="match status" value="1"/>
</dbReference>
<dbReference type="FunFam" id="2.40.50.140:FF:000003">
    <property type="entry name" value="50S ribosomal protein L2"/>
    <property type="match status" value="1"/>
</dbReference>
<dbReference type="FunFam" id="4.10.950.10:FF:000001">
    <property type="entry name" value="50S ribosomal protein L2"/>
    <property type="match status" value="1"/>
</dbReference>
<dbReference type="Gene3D" id="2.30.30.30">
    <property type="match status" value="1"/>
</dbReference>
<dbReference type="Gene3D" id="2.40.50.140">
    <property type="entry name" value="Nucleic acid-binding proteins"/>
    <property type="match status" value="1"/>
</dbReference>
<dbReference type="Gene3D" id="4.10.950.10">
    <property type="entry name" value="Ribosomal protein L2, domain 3"/>
    <property type="match status" value="1"/>
</dbReference>
<dbReference type="HAMAP" id="MF_01320_B">
    <property type="entry name" value="Ribosomal_uL2_B"/>
    <property type="match status" value="1"/>
</dbReference>
<dbReference type="InterPro" id="IPR012340">
    <property type="entry name" value="NA-bd_OB-fold"/>
</dbReference>
<dbReference type="InterPro" id="IPR014722">
    <property type="entry name" value="Rib_uL2_dom2"/>
</dbReference>
<dbReference type="InterPro" id="IPR002171">
    <property type="entry name" value="Ribosomal_uL2"/>
</dbReference>
<dbReference type="InterPro" id="IPR005880">
    <property type="entry name" value="Ribosomal_uL2_bac/org-type"/>
</dbReference>
<dbReference type="InterPro" id="IPR022669">
    <property type="entry name" value="Ribosomal_uL2_C"/>
</dbReference>
<dbReference type="InterPro" id="IPR022671">
    <property type="entry name" value="Ribosomal_uL2_CS"/>
</dbReference>
<dbReference type="InterPro" id="IPR014726">
    <property type="entry name" value="Ribosomal_uL2_dom3"/>
</dbReference>
<dbReference type="InterPro" id="IPR022666">
    <property type="entry name" value="Ribosomal_uL2_RNA-bd_dom"/>
</dbReference>
<dbReference type="InterPro" id="IPR008991">
    <property type="entry name" value="Translation_prot_SH3-like_sf"/>
</dbReference>
<dbReference type="NCBIfam" id="TIGR01171">
    <property type="entry name" value="rplB_bact"/>
    <property type="match status" value="1"/>
</dbReference>
<dbReference type="PANTHER" id="PTHR13691:SF5">
    <property type="entry name" value="LARGE RIBOSOMAL SUBUNIT PROTEIN UL2M"/>
    <property type="match status" value="1"/>
</dbReference>
<dbReference type="PANTHER" id="PTHR13691">
    <property type="entry name" value="RIBOSOMAL PROTEIN L2"/>
    <property type="match status" value="1"/>
</dbReference>
<dbReference type="Pfam" id="PF00181">
    <property type="entry name" value="Ribosomal_L2"/>
    <property type="match status" value="1"/>
</dbReference>
<dbReference type="Pfam" id="PF03947">
    <property type="entry name" value="Ribosomal_L2_C"/>
    <property type="match status" value="1"/>
</dbReference>
<dbReference type="PIRSF" id="PIRSF002158">
    <property type="entry name" value="Ribosomal_L2"/>
    <property type="match status" value="1"/>
</dbReference>
<dbReference type="SMART" id="SM01383">
    <property type="entry name" value="Ribosomal_L2"/>
    <property type="match status" value="1"/>
</dbReference>
<dbReference type="SMART" id="SM01382">
    <property type="entry name" value="Ribosomal_L2_C"/>
    <property type="match status" value="1"/>
</dbReference>
<dbReference type="SUPFAM" id="SSF50249">
    <property type="entry name" value="Nucleic acid-binding proteins"/>
    <property type="match status" value="1"/>
</dbReference>
<dbReference type="SUPFAM" id="SSF50104">
    <property type="entry name" value="Translation proteins SH3-like domain"/>
    <property type="match status" value="1"/>
</dbReference>
<dbReference type="PROSITE" id="PS00467">
    <property type="entry name" value="RIBOSOMAL_L2"/>
    <property type="match status" value="1"/>
</dbReference>
<feature type="chain" id="PRO_0000237184" description="Large ribosomal subunit protein uL2">
    <location>
        <begin position="1"/>
        <end position="276"/>
    </location>
</feature>
<feature type="region of interest" description="Disordered" evidence="2">
    <location>
        <begin position="224"/>
        <end position="276"/>
    </location>
</feature>
<feature type="compositionally biased region" description="Basic residues" evidence="2">
    <location>
        <begin position="254"/>
        <end position="270"/>
    </location>
</feature>
<name>RL2_EHRRG</name>
<proteinExistence type="inferred from homology"/>
<accession>Q5FFU3</accession>
<comment type="function">
    <text evidence="1">One of the primary rRNA binding proteins. Required for association of the 30S and 50S subunits to form the 70S ribosome, for tRNA binding and peptide bond formation. It has been suggested to have peptidyltransferase activity; this is somewhat controversial. Makes several contacts with the 16S rRNA in the 70S ribosome.</text>
</comment>
<comment type="subunit">
    <text evidence="1">Part of the 50S ribosomal subunit. Forms a bridge to the 30S subunit in the 70S ribosome.</text>
</comment>
<comment type="similarity">
    <text evidence="1">Belongs to the universal ribosomal protein uL2 family.</text>
</comment>
<sequence length="276" mass="29930">MGIKNLNSVTPSLRGTVLLDKSTLWKGRPEKSLVGYKISHGGRNSRGVITVRHRGKGHKRLYRIIDFKRKKVGVPATVERLEYDPNRTAFIALLSYDDGEKSYIIAPHGLKKGDVIMSGNGSDILPGNCLMLKLIPVGTFVHNVELRPGGGGIIARSAGTYAQLMSKDGIYVLLRLSSGEIRKVLADCCATIGIVSNLDNQNVKLGKAGRSRWLGIRPTVRGVAMNPIDHPHGGGEGKTSGGRNPVTPWGVSTKGKKTRKKNKSSNKYIKRVSDKG</sequence>
<evidence type="ECO:0000255" key="1">
    <source>
        <dbReference type="HAMAP-Rule" id="MF_01320"/>
    </source>
</evidence>
<evidence type="ECO:0000256" key="2">
    <source>
        <dbReference type="SAM" id="MobiDB-lite"/>
    </source>
</evidence>
<evidence type="ECO:0000305" key="3"/>
<protein>
    <recommendedName>
        <fullName evidence="1">Large ribosomal subunit protein uL2</fullName>
    </recommendedName>
    <alternativeName>
        <fullName evidence="3">50S ribosomal protein L2</fullName>
    </alternativeName>
</protein>
<reference key="1">
    <citation type="journal article" date="2006" name="J. Bacteriol.">
        <title>Comparative genomic analysis of three strains of Ehrlichia ruminantium reveals an active process of genome size plasticity.</title>
        <authorList>
            <person name="Frutos R."/>
            <person name="Viari A."/>
            <person name="Ferraz C."/>
            <person name="Morgat A."/>
            <person name="Eychenie S."/>
            <person name="Kandassamy Y."/>
            <person name="Chantal I."/>
            <person name="Bensaid A."/>
            <person name="Coissac E."/>
            <person name="Vachiery N."/>
            <person name="Demaille J."/>
            <person name="Martinez D."/>
        </authorList>
    </citation>
    <scope>NUCLEOTIDE SEQUENCE [LARGE SCALE GENOMIC DNA]</scope>
    <source>
        <strain>Gardel</strain>
    </source>
</reference>
<organism>
    <name type="scientific">Ehrlichia ruminantium (strain Gardel)</name>
    <dbReference type="NCBI Taxonomy" id="302409"/>
    <lineage>
        <taxon>Bacteria</taxon>
        <taxon>Pseudomonadati</taxon>
        <taxon>Pseudomonadota</taxon>
        <taxon>Alphaproteobacteria</taxon>
        <taxon>Rickettsiales</taxon>
        <taxon>Anaplasmataceae</taxon>
        <taxon>Ehrlichia</taxon>
    </lineage>
</organism>
<keyword id="KW-0687">Ribonucleoprotein</keyword>
<keyword id="KW-0689">Ribosomal protein</keyword>
<keyword id="KW-0694">RNA-binding</keyword>
<keyword id="KW-0699">rRNA-binding</keyword>